<comment type="subcellular location">
    <subcellularLocation>
        <location evidence="1">Mitochondrion outer membrane</location>
        <topology evidence="1">Peripheral membrane protein</topology>
    </subcellularLocation>
</comment>
<comment type="similarity">
    <text evidence="2">Belongs to the FMP52 family.</text>
</comment>
<evidence type="ECO:0000250" key="1"/>
<evidence type="ECO:0000305" key="2"/>
<gene>
    <name type="primary">fmp521</name>
    <name type="ORF">ATEG_06652</name>
</gene>
<dbReference type="EMBL" id="CH476602">
    <property type="protein sequence ID" value="EAU33196.1"/>
    <property type="molecule type" value="Genomic_DNA"/>
</dbReference>
<dbReference type="RefSeq" id="XP_001215830.1">
    <property type="nucleotide sequence ID" value="XM_001215830.1"/>
</dbReference>
<dbReference type="SMR" id="Q0CI32"/>
<dbReference type="STRING" id="341663.Q0CI32"/>
<dbReference type="EnsemblFungi" id="EAU33196">
    <property type="protein sequence ID" value="EAU33196"/>
    <property type="gene ID" value="ATEG_06652"/>
</dbReference>
<dbReference type="GeneID" id="4322184"/>
<dbReference type="VEuPathDB" id="FungiDB:ATEG_06652"/>
<dbReference type="eggNOG" id="KOG4039">
    <property type="taxonomic scope" value="Eukaryota"/>
</dbReference>
<dbReference type="HOGENOM" id="CLU_071330_3_0_1"/>
<dbReference type="OMA" id="DWPQLTI"/>
<dbReference type="OrthoDB" id="430436at2759"/>
<dbReference type="Proteomes" id="UP000007963">
    <property type="component" value="Unassembled WGS sequence"/>
</dbReference>
<dbReference type="GO" id="GO:0005741">
    <property type="term" value="C:mitochondrial outer membrane"/>
    <property type="evidence" value="ECO:0007669"/>
    <property type="project" value="UniProtKB-SubCell"/>
</dbReference>
<dbReference type="GO" id="GO:0051170">
    <property type="term" value="P:import into nucleus"/>
    <property type="evidence" value="ECO:0007669"/>
    <property type="project" value="TreeGrafter"/>
</dbReference>
<dbReference type="FunFam" id="3.40.50.720:FF:000366">
    <property type="entry name" value="Protein FMP52, mitochondrial"/>
    <property type="match status" value="1"/>
</dbReference>
<dbReference type="Gene3D" id="3.40.50.720">
    <property type="entry name" value="NAD(P)-binding Rossmann-like Domain"/>
    <property type="match status" value="1"/>
</dbReference>
<dbReference type="InterPro" id="IPR001509">
    <property type="entry name" value="Epimerase_deHydtase"/>
</dbReference>
<dbReference type="InterPro" id="IPR036291">
    <property type="entry name" value="NAD(P)-bd_dom_sf"/>
</dbReference>
<dbReference type="PANTHER" id="PTHR14097">
    <property type="entry name" value="OXIDOREDUCTASE HTATIP2"/>
    <property type="match status" value="1"/>
</dbReference>
<dbReference type="PANTHER" id="PTHR14097:SF7">
    <property type="entry name" value="OXIDOREDUCTASE HTATIP2"/>
    <property type="match status" value="1"/>
</dbReference>
<dbReference type="Pfam" id="PF01370">
    <property type="entry name" value="Epimerase"/>
    <property type="match status" value="1"/>
</dbReference>
<dbReference type="SUPFAM" id="SSF51735">
    <property type="entry name" value="NAD(P)-binding Rossmann-fold domains"/>
    <property type="match status" value="1"/>
</dbReference>
<sequence length="232" mass="24266">MASVALIGCTGMVGSHILTSLLAHPSVARVDTISRRTPNAASAAQAKLTTFVSDDTSKWASQLSALTPIPSIFFSSFGTTRAAAGGFENQYKIEHGLNVEMARAARDAGTKVYVLVSSSGASKDSSIPYSRMKGEIEEEAKAMGFEHTVILRPGLISGTREESRPLEAAARYIAGFAGKVHSGLKDSWAQDADVIAKAAVNAGLKALEGDVPAGSEKVWVLGGSDIIKLGKE</sequence>
<accession>Q0CI32</accession>
<keyword id="KW-0472">Membrane</keyword>
<keyword id="KW-0496">Mitochondrion</keyword>
<keyword id="KW-1000">Mitochondrion outer membrane</keyword>
<keyword id="KW-1185">Reference proteome</keyword>
<keyword id="KW-0809">Transit peptide</keyword>
<name>FM521_ASPTN</name>
<protein>
    <recommendedName>
        <fullName>Protein fmp52-1, mitochondrial</fullName>
    </recommendedName>
</protein>
<feature type="transit peptide" description="Mitochondrion">
    <location>
        <begin position="1"/>
        <end position="36"/>
    </location>
</feature>
<feature type="chain" id="PRO_0000301815" description="Protein fmp52-1, mitochondrial">
    <location>
        <begin position="37"/>
        <end position="232"/>
    </location>
</feature>
<reference key="1">
    <citation type="submission" date="2005-09" db="EMBL/GenBank/DDBJ databases">
        <title>Annotation of the Aspergillus terreus NIH2624 genome.</title>
        <authorList>
            <person name="Birren B.W."/>
            <person name="Lander E.S."/>
            <person name="Galagan J.E."/>
            <person name="Nusbaum C."/>
            <person name="Devon K."/>
            <person name="Henn M."/>
            <person name="Ma L.-J."/>
            <person name="Jaffe D.B."/>
            <person name="Butler J."/>
            <person name="Alvarez P."/>
            <person name="Gnerre S."/>
            <person name="Grabherr M."/>
            <person name="Kleber M."/>
            <person name="Mauceli E.W."/>
            <person name="Brockman W."/>
            <person name="Rounsley S."/>
            <person name="Young S.K."/>
            <person name="LaButti K."/>
            <person name="Pushparaj V."/>
            <person name="DeCaprio D."/>
            <person name="Crawford M."/>
            <person name="Koehrsen M."/>
            <person name="Engels R."/>
            <person name="Montgomery P."/>
            <person name="Pearson M."/>
            <person name="Howarth C."/>
            <person name="Larson L."/>
            <person name="Luoma S."/>
            <person name="White J."/>
            <person name="Alvarado L."/>
            <person name="Kodira C.D."/>
            <person name="Zeng Q."/>
            <person name="Oleary S."/>
            <person name="Yandava C."/>
            <person name="Denning D.W."/>
            <person name="Nierman W.C."/>
            <person name="Milne T."/>
            <person name="Madden K."/>
        </authorList>
    </citation>
    <scope>NUCLEOTIDE SEQUENCE [LARGE SCALE GENOMIC DNA]</scope>
    <source>
        <strain>NIH 2624 / FGSC A1156</strain>
    </source>
</reference>
<proteinExistence type="inferred from homology"/>
<organism>
    <name type="scientific">Aspergillus terreus (strain NIH 2624 / FGSC A1156)</name>
    <dbReference type="NCBI Taxonomy" id="341663"/>
    <lineage>
        <taxon>Eukaryota</taxon>
        <taxon>Fungi</taxon>
        <taxon>Dikarya</taxon>
        <taxon>Ascomycota</taxon>
        <taxon>Pezizomycotina</taxon>
        <taxon>Eurotiomycetes</taxon>
        <taxon>Eurotiomycetidae</taxon>
        <taxon>Eurotiales</taxon>
        <taxon>Aspergillaceae</taxon>
        <taxon>Aspergillus</taxon>
        <taxon>Aspergillus subgen. Circumdati</taxon>
    </lineage>
</organism>